<comment type="function">
    <text evidence="1">Catalyzes the condensation of ATP and 5-phosphoribose 1-diphosphate to form N'-(5'-phosphoribosyl)-ATP (PR-ATP). Has a crucial role in the pathway because the rate of histidine biosynthesis seems to be controlled primarily by regulation of HisG enzymatic activity (By similarity).</text>
</comment>
<comment type="catalytic activity">
    <reaction>
        <text>1-(5-phospho-beta-D-ribosyl)-ATP + diphosphate = 5-phospho-alpha-D-ribose 1-diphosphate + ATP</text>
        <dbReference type="Rhea" id="RHEA:18473"/>
        <dbReference type="ChEBI" id="CHEBI:30616"/>
        <dbReference type="ChEBI" id="CHEBI:33019"/>
        <dbReference type="ChEBI" id="CHEBI:58017"/>
        <dbReference type="ChEBI" id="CHEBI:73183"/>
        <dbReference type="EC" id="2.4.2.17"/>
    </reaction>
</comment>
<comment type="pathway">
    <text>Amino-acid biosynthesis; L-histidine biosynthesis; L-histidine from 5-phospho-alpha-D-ribose 1-diphosphate: step 1/9.</text>
</comment>
<comment type="subunit">
    <text evidence="1">Heteromultimer composed of HisG and HisZ subunits.</text>
</comment>
<comment type="subcellular location">
    <subcellularLocation>
        <location evidence="1">Cytoplasm</location>
    </subcellularLocation>
</comment>
<comment type="domain">
    <text>Lacks the C-terminal regulatory region which is replaced by HisZ.</text>
</comment>
<comment type="similarity">
    <text evidence="2">Belongs to the ATP phosphoribosyltransferase family. Short subfamily.</text>
</comment>
<proteinExistence type="inferred from homology"/>
<name>HIS1_DICTD</name>
<sequence length="207" mass="23797">MIRVAIPTGRMLEQALDFLRNFDDRLLDEEKGRKLRIHGERFEVFLAKPWDLPLYVEERVVDLGIIGRDVIWEQEKNVVNLISLPFGYCKMVIAGYPYVSLKGNGKEIRIATKYENITKKLLENRWGKIKIIKLNGSVELGPILNISDLIVDIVETGKTLRDNGLEVKEVLFESSACLISNVVSFAYLRKEILSFVKEVRKLNDKCN</sequence>
<evidence type="ECO:0000250" key="1"/>
<evidence type="ECO:0000305" key="2"/>
<feature type="chain" id="PRO_1000135280" description="ATP phosphoribosyltransferase">
    <location>
        <begin position="1"/>
        <end position="207"/>
    </location>
</feature>
<accession>B8E2C2</accession>
<keyword id="KW-0028">Amino-acid biosynthesis</keyword>
<keyword id="KW-0067">ATP-binding</keyword>
<keyword id="KW-0963">Cytoplasm</keyword>
<keyword id="KW-0328">Glycosyltransferase</keyword>
<keyword id="KW-0368">Histidine biosynthesis</keyword>
<keyword id="KW-0547">Nucleotide-binding</keyword>
<keyword id="KW-1185">Reference proteome</keyword>
<keyword id="KW-0808">Transferase</keyword>
<dbReference type="EC" id="2.4.2.17"/>
<dbReference type="EMBL" id="CP001251">
    <property type="protein sequence ID" value="ACK42399.1"/>
    <property type="molecule type" value="Genomic_DNA"/>
</dbReference>
<dbReference type="RefSeq" id="WP_012583482.1">
    <property type="nucleotide sequence ID" value="NC_011661.1"/>
</dbReference>
<dbReference type="RefSeq" id="YP_002353013.1">
    <property type="nucleotide sequence ID" value="NC_011661.1"/>
</dbReference>
<dbReference type="SMR" id="B8E2C2"/>
<dbReference type="FunCoup" id="B8E2C2">
    <property type="interactions" value="304"/>
</dbReference>
<dbReference type="STRING" id="515635.Dtur_1120"/>
<dbReference type="EnsemblBacteria" id="ACK42399">
    <property type="protein sequence ID" value="ACK42399"/>
    <property type="gene ID" value="Dtur_1120"/>
</dbReference>
<dbReference type="KEGG" id="dtu:Dtur_1120"/>
<dbReference type="PATRIC" id="fig|515635.4.peg.1157"/>
<dbReference type="eggNOG" id="COG0040">
    <property type="taxonomic scope" value="Bacteria"/>
</dbReference>
<dbReference type="HOGENOM" id="CLU_038115_2_0_0"/>
<dbReference type="InParanoid" id="B8E2C2"/>
<dbReference type="OrthoDB" id="9801867at2"/>
<dbReference type="UniPathway" id="UPA00031">
    <property type="reaction ID" value="UER00006"/>
</dbReference>
<dbReference type="Proteomes" id="UP000007719">
    <property type="component" value="Chromosome"/>
</dbReference>
<dbReference type="GO" id="GO:0005737">
    <property type="term" value="C:cytoplasm"/>
    <property type="evidence" value="ECO:0007669"/>
    <property type="project" value="UniProtKB-SubCell"/>
</dbReference>
<dbReference type="GO" id="GO:0005524">
    <property type="term" value="F:ATP binding"/>
    <property type="evidence" value="ECO:0007669"/>
    <property type="project" value="UniProtKB-KW"/>
</dbReference>
<dbReference type="GO" id="GO:0003879">
    <property type="term" value="F:ATP phosphoribosyltransferase activity"/>
    <property type="evidence" value="ECO:0000318"/>
    <property type="project" value="GO_Central"/>
</dbReference>
<dbReference type="GO" id="GO:0000105">
    <property type="term" value="P:L-histidine biosynthetic process"/>
    <property type="evidence" value="ECO:0000318"/>
    <property type="project" value="GO_Central"/>
</dbReference>
<dbReference type="CDD" id="cd13595">
    <property type="entry name" value="PBP2_HisGs"/>
    <property type="match status" value="1"/>
</dbReference>
<dbReference type="FunFam" id="3.40.190.10:FF:000008">
    <property type="entry name" value="ATP phosphoribosyltransferase"/>
    <property type="match status" value="1"/>
</dbReference>
<dbReference type="Gene3D" id="3.40.190.10">
    <property type="entry name" value="Periplasmic binding protein-like II"/>
    <property type="match status" value="2"/>
</dbReference>
<dbReference type="InterPro" id="IPR013820">
    <property type="entry name" value="ATP_PRibTrfase_cat"/>
</dbReference>
<dbReference type="InterPro" id="IPR018198">
    <property type="entry name" value="ATP_PRibTrfase_CS"/>
</dbReference>
<dbReference type="InterPro" id="IPR001348">
    <property type="entry name" value="ATP_PRibTrfase_HisG"/>
</dbReference>
<dbReference type="InterPro" id="IPR024893">
    <property type="entry name" value="ATP_PRibTrfase_HisG_short"/>
</dbReference>
<dbReference type="NCBIfam" id="TIGR00070">
    <property type="entry name" value="hisG"/>
    <property type="match status" value="1"/>
</dbReference>
<dbReference type="PANTHER" id="PTHR21403:SF8">
    <property type="entry name" value="ATP PHOSPHORIBOSYLTRANSFERASE"/>
    <property type="match status" value="1"/>
</dbReference>
<dbReference type="PANTHER" id="PTHR21403">
    <property type="entry name" value="ATP PHOSPHORIBOSYLTRANSFERASE ATP-PRTASE"/>
    <property type="match status" value="1"/>
</dbReference>
<dbReference type="Pfam" id="PF01634">
    <property type="entry name" value="HisG"/>
    <property type="match status" value="1"/>
</dbReference>
<dbReference type="SUPFAM" id="SSF53850">
    <property type="entry name" value="Periplasmic binding protein-like II"/>
    <property type="match status" value="1"/>
</dbReference>
<dbReference type="PROSITE" id="PS01316">
    <property type="entry name" value="ATP_P_PHORIBOSYLTR"/>
    <property type="match status" value="1"/>
</dbReference>
<reference key="1">
    <citation type="journal article" date="2016" name="Front. Microbiol.">
        <title>The complete genome sequence of hyperthermophile Dictyoglomus turgidum DSM 6724 reveals a specialized carbohydrate fermentor.</title>
        <authorList>
            <person name="Brumm P.J."/>
            <person name="Gowda K."/>
            <person name="Robb F.T."/>
            <person name="Mead D.A."/>
        </authorList>
    </citation>
    <scope>NUCLEOTIDE SEQUENCE [LARGE SCALE GENOMIC DNA]</scope>
    <source>
        <strain>DSM 6724 / Z-1310</strain>
    </source>
</reference>
<gene>
    <name type="primary">hisG</name>
    <name type="ordered locus">Dtur_1120</name>
</gene>
<organism>
    <name type="scientific">Dictyoglomus turgidum (strain DSM 6724 / Z-1310)</name>
    <dbReference type="NCBI Taxonomy" id="515635"/>
    <lineage>
        <taxon>Bacteria</taxon>
        <taxon>Pseudomonadati</taxon>
        <taxon>Dictyoglomota</taxon>
        <taxon>Dictyoglomia</taxon>
        <taxon>Dictyoglomales</taxon>
        <taxon>Dictyoglomaceae</taxon>
        <taxon>Dictyoglomus</taxon>
    </lineage>
</organism>
<protein>
    <recommendedName>
        <fullName>ATP phosphoribosyltransferase</fullName>
        <shortName>ATP-PRT</shortName>
        <shortName>ATP-PRTase</shortName>
        <ecNumber>2.4.2.17</ecNumber>
    </recommendedName>
</protein>